<organism>
    <name type="scientific">Escherichia coli O6:H1 (strain CFT073 / ATCC 700928 / UPEC)</name>
    <dbReference type="NCBI Taxonomy" id="199310"/>
    <lineage>
        <taxon>Bacteria</taxon>
        <taxon>Pseudomonadati</taxon>
        <taxon>Pseudomonadota</taxon>
        <taxon>Gammaproteobacteria</taxon>
        <taxon>Enterobacterales</taxon>
        <taxon>Enterobacteriaceae</taxon>
        <taxon>Escherichia</taxon>
    </lineage>
</organism>
<protein>
    <recommendedName>
        <fullName evidence="1">Nitrogen regulatory protein GlnK</fullName>
    </recommendedName>
    <alternativeName>
        <fullName evidence="1">Nitrogen regulatory protein P-II 2</fullName>
    </alternativeName>
</protein>
<keyword id="KW-0067">ATP-binding</keyword>
<keyword id="KW-0997">Cell inner membrane</keyword>
<keyword id="KW-1003">Cell membrane</keyword>
<keyword id="KW-0963">Cytoplasm</keyword>
<keyword id="KW-0472">Membrane</keyword>
<keyword id="KW-0547">Nucleotide-binding</keyword>
<keyword id="KW-0597">Phosphoprotein</keyword>
<keyword id="KW-1185">Reference proteome</keyword>
<name>GLNK_ECOL6</name>
<sequence length="112" mass="12259">MKLVTVIIKPFKLEDVREALSSIGIQGLTVTEVKGFGRQKGHAELYRGAEYSVNFLPKVKIDVAIADDQLDEVIDIVSKAAYTGKIGDGKIFVAELQRVIRIRTGEADEAAL</sequence>
<gene>
    <name type="primary">glnK</name>
    <name type="ordered locus">c0568</name>
</gene>
<comment type="function">
    <text evidence="1">Involved in the regulation of nitrogen metabolism. Regulates the activity of its targets by protein-protein interaction in response to the nitrogen status of the cell. Involved in the regulation of the ammonium transporter AmtB so as to optimize ammonium uptake under all growth conditions. In nitrogen-limited conditions, GlnK does not interact with AmtB, which remains active and imports ammonium. When extracellular ammonium increases, GlnK associates tightly with AmtB in the inner membrane, thereby inhibiting the transporter activity.</text>
</comment>
<comment type="activity regulation">
    <text evidence="1">Formation of the GlnK-AmtB complex is influenced by intracellular pools of the effector molecules ATP, ADP, Mg(2+) and 2-oxoglutarate. The GlnK-AmtB interaction is also controlled by the level of intracellular glutamine and the uridylylation status of GlnK.</text>
</comment>
<comment type="subunit">
    <text evidence="1">Homotrimer. In response to elevation of the extracellular ammonium concentration, interacts and forms a complex with AmtB.</text>
</comment>
<comment type="subcellular location">
    <subcellularLocation>
        <location evidence="1">Cytoplasm</location>
    </subcellularLocation>
    <subcellularLocation>
        <location evidence="1">Cell inner membrane</location>
    </subcellularLocation>
    <text evidence="1">During nitrogen limitation, GlnK is predominantly in its fully uridylylated state in the cytoplasmic fraction. In response to nitrogen shock, GlnK is deuridylylated rapidly and associates tightly with AmtB in the inner membrane.</text>
</comment>
<comment type="PTM">
    <text evidence="1">Uridylylated/deuridylylated by GlnD. Fully uridylylated in nitrogen-limited conditions and deuridylylated when extracellular ammonium increases.</text>
</comment>
<comment type="similarity">
    <text evidence="2">Belongs to the P(II) protein family.</text>
</comment>
<reference key="1">
    <citation type="journal article" date="2002" name="Proc. Natl. Acad. Sci. U.S.A.">
        <title>Extensive mosaic structure revealed by the complete genome sequence of uropathogenic Escherichia coli.</title>
        <authorList>
            <person name="Welch R.A."/>
            <person name="Burland V."/>
            <person name="Plunkett G. III"/>
            <person name="Redford P."/>
            <person name="Roesch P."/>
            <person name="Rasko D."/>
            <person name="Buckles E.L."/>
            <person name="Liou S.-R."/>
            <person name="Boutin A."/>
            <person name="Hackett J."/>
            <person name="Stroud D."/>
            <person name="Mayhew G.F."/>
            <person name="Rose D.J."/>
            <person name="Zhou S."/>
            <person name="Schwartz D.C."/>
            <person name="Perna N.T."/>
            <person name="Mobley H.L.T."/>
            <person name="Donnenberg M.S."/>
            <person name="Blattner F.R."/>
        </authorList>
    </citation>
    <scope>NUCLEOTIDE SEQUENCE [LARGE SCALE GENOMIC DNA]</scope>
    <source>
        <strain>CFT073 / ATCC 700928 / UPEC</strain>
    </source>
</reference>
<dbReference type="EMBL" id="AE014075">
    <property type="protein sequence ID" value="AAN79046.1"/>
    <property type="molecule type" value="Genomic_DNA"/>
</dbReference>
<dbReference type="RefSeq" id="WP_000780338.1">
    <property type="nucleotide sequence ID" value="NZ_CP051263.1"/>
</dbReference>
<dbReference type="SMR" id="P0AC56"/>
<dbReference type="STRING" id="199310.c0568"/>
<dbReference type="GeneID" id="93777000"/>
<dbReference type="KEGG" id="ecc:c0568"/>
<dbReference type="eggNOG" id="COG0347">
    <property type="taxonomic scope" value="Bacteria"/>
</dbReference>
<dbReference type="HOGENOM" id="CLU_082268_0_0_6"/>
<dbReference type="BioCyc" id="ECOL199310:C0568-MONOMER"/>
<dbReference type="Proteomes" id="UP000001410">
    <property type="component" value="Chromosome"/>
</dbReference>
<dbReference type="GO" id="GO:0005829">
    <property type="term" value="C:cytosol"/>
    <property type="evidence" value="ECO:0007669"/>
    <property type="project" value="TreeGrafter"/>
</dbReference>
<dbReference type="GO" id="GO:0005886">
    <property type="term" value="C:plasma membrane"/>
    <property type="evidence" value="ECO:0007669"/>
    <property type="project" value="UniProtKB-SubCell"/>
</dbReference>
<dbReference type="GO" id="GO:0005524">
    <property type="term" value="F:ATP binding"/>
    <property type="evidence" value="ECO:0007669"/>
    <property type="project" value="UniProtKB-KW"/>
</dbReference>
<dbReference type="GO" id="GO:0030234">
    <property type="term" value="F:enzyme regulator activity"/>
    <property type="evidence" value="ECO:0007669"/>
    <property type="project" value="InterPro"/>
</dbReference>
<dbReference type="GO" id="GO:0006808">
    <property type="term" value="P:regulation of nitrogen utilization"/>
    <property type="evidence" value="ECO:0007669"/>
    <property type="project" value="InterPro"/>
</dbReference>
<dbReference type="FunFam" id="3.30.70.120:FF:000001">
    <property type="entry name" value="Nitrogen regulatory protein P-II"/>
    <property type="match status" value="1"/>
</dbReference>
<dbReference type="Gene3D" id="3.30.70.120">
    <property type="match status" value="1"/>
</dbReference>
<dbReference type="InterPro" id="IPR002187">
    <property type="entry name" value="N-reg_PII"/>
</dbReference>
<dbReference type="InterPro" id="IPR011322">
    <property type="entry name" value="N-reg_PII-like_a/b"/>
</dbReference>
<dbReference type="InterPro" id="IPR015867">
    <property type="entry name" value="N-reg_PII/ATP_PRibTrfase_C"/>
</dbReference>
<dbReference type="InterPro" id="IPR017918">
    <property type="entry name" value="N-reg_PII_CS"/>
</dbReference>
<dbReference type="InterPro" id="IPR002332">
    <property type="entry name" value="N-reg_PII_urydylation_site"/>
</dbReference>
<dbReference type="NCBIfam" id="NF007946">
    <property type="entry name" value="PRK10665.1"/>
    <property type="match status" value="1"/>
</dbReference>
<dbReference type="PANTHER" id="PTHR30115:SF20">
    <property type="entry name" value="NITROGEN REGULATORY PROTEIN GLNK"/>
    <property type="match status" value="1"/>
</dbReference>
<dbReference type="PANTHER" id="PTHR30115">
    <property type="entry name" value="NITROGEN REGULATORY PROTEIN P-II"/>
    <property type="match status" value="1"/>
</dbReference>
<dbReference type="Pfam" id="PF00543">
    <property type="entry name" value="P-II"/>
    <property type="match status" value="1"/>
</dbReference>
<dbReference type="PIRSF" id="PIRSF039144">
    <property type="entry name" value="GlnB"/>
    <property type="match status" value="1"/>
</dbReference>
<dbReference type="PRINTS" id="PR00340">
    <property type="entry name" value="PIIGLNB"/>
</dbReference>
<dbReference type="SMART" id="SM00938">
    <property type="entry name" value="P-II"/>
    <property type="match status" value="1"/>
</dbReference>
<dbReference type="SUPFAM" id="SSF54913">
    <property type="entry name" value="GlnB-like"/>
    <property type="match status" value="1"/>
</dbReference>
<dbReference type="PROSITE" id="PS00638">
    <property type="entry name" value="PII_GLNB_CTER"/>
    <property type="match status" value="1"/>
</dbReference>
<dbReference type="PROSITE" id="PS51343">
    <property type="entry name" value="PII_GLNB_DOM"/>
    <property type="match status" value="1"/>
</dbReference>
<dbReference type="PROSITE" id="PS00496">
    <property type="entry name" value="PII_GLNB_UMP"/>
    <property type="match status" value="1"/>
</dbReference>
<evidence type="ECO:0000250" key="1">
    <source>
        <dbReference type="UniProtKB" id="P0AC55"/>
    </source>
</evidence>
<evidence type="ECO:0000255" key="2">
    <source>
        <dbReference type="PROSITE-ProRule" id="PRU00675"/>
    </source>
</evidence>
<accession>P0AC56</accession>
<accession>P38504</accession>
<accession>P77118</accession>
<proteinExistence type="inferred from homology"/>
<feature type="chain" id="PRO_0000139776" description="Nitrogen regulatory protein GlnK">
    <location>
        <begin position="1"/>
        <end position="112"/>
    </location>
</feature>
<feature type="binding site" evidence="1">
    <location>
        <position position="29"/>
    </location>
    <ligand>
        <name>ADP</name>
        <dbReference type="ChEBI" id="CHEBI:456216"/>
    </ligand>
</feature>
<feature type="binding site" evidence="1">
    <location>
        <position position="37"/>
    </location>
    <ligand>
        <name>ATP</name>
        <dbReference type="ChEBI" id="CHEBI:30616"/>
    </ligand>
</feature>
<feature type="binding site" evidence="1">
    <location>
        <begin position="38"/>
        <end position="39"/>
    </location>
    <ligand>
        <name>ADP</name>
        <dbReference type="ChEBI" id="CHEBI:456216"/>
    </ligand>
</feature>
<feature type="binding site" evidence="1">
    <location>
        <position position="64"/>
    </location>
    <ligand>
        <name>ADP</name>
        <dbReference type="ChEBI" id="CHEBI:456216"/>
    </ligand>
</feature>
<feature type="binding site" evidence="1">
    <location>
        <position position="64"/>
    </location>
    <ligand>
        <name>ATP</name>
        <dbReference type="ChEBI" id="CHEBI:30616"/>
    </ligand>
</feature>
<feature type="binding site" evidence="1">
    <location>
        <begin position="87"/>
        <end position="90"/>
    </location>
    <ligand>
        <name>ADP</name>
        <dbReference type="ChEBI" id="CHEBI:456216"/>
    </ligand>
</feature>
<feature type="binding site" evidence="1">
    <location>
        <begin position="87"/>
        <end position="90"/>
    </location>
    <ligand>
        <name>ATP</name>
        <dbReference type="ChEBI" id="CHEBI:30616"/>
    </ligand>
</feature>
<feature type="binding site" evidence="1">
    <location>
        <begin position="101"/>
        <end position="103"/>
    </location>
    <ligand>
        <name>ADP</name>
        <dbReference type="ChEBI" id="CHEBI:456216"/>
    </ligand>
</feature>
<feature type="binding site" evidence="1">
    <location>
        <begin position="101"/>
        <end position="103"/>
    </location>
    <ligand>
        <name>ATP</name>
        <dbReference type="ChEBI" id="CHEBI:30616"/>
    </ligand>
</feature>
<feature type="modified residue" description="O-UMP-tyrosine" evidence="2">
    <location>
        <position position="51"/>
    </location>
</feature>